<evidence type="ECO:0000250" key="1"/>
<evidence type="ECO:0000255" key="2"/>
<evidence type="ECO:0000255" key="3">
    <source>
        <dbReference type="PROSITE-ProRule" id="PRU01038"/>
    </source>
</evidence>
<evidence type="ECO:0000312" key="4">
    <source>
        <dbReference type="EMBL" id="VUC53847.1"/>
    </source>
</evidence>
<evidence type="ECO:0000312" key="5">
    <source>
        <dbReference type="Proteomes" id="UP000074855"/>
    </source>
</evidence>
<comment type="subcellular location">
    <subcellularLocation>
        <location evidence="1">Cell surface</location>
    </subcellularLocation>
    <subcellularLocation>
        <location evidence="1">Cell membrane</location>
    </subcellularLocation>
</comment>
<reference evidence="5" key="1">
    <citation type="journal article" date="2014" name="BMC Biol.">
        <title>A comprehensive evaluation of rodent malaria parasite genomes and gene expression.</title>
        <authorList>
            <person name="Otto T.D."/>
            <person name="Bohme U."/>
            <person name="Jackson A.P."/>
            <person name="Hunt M."/>
            <person name="Franke-Fayard B."/>
            <person name="Hoeijmakers W.A."/>
            <person name="Religa A.A."/>
            <person name="Robertson L."/>
            <person name="Sanders M."/>
            <person name="Ogun S.A."/>
            <person name="Cunningham D."/>
            <person name="Erhart A."/>
            <person name="Billker O."/>
            <person name="Khan S.M."/>
            <person name="Stunnenberg H.G."/>
            <person name="Langhorne J."/>
            <person name="Holder A.A."/>
            <person name="Waters A.P."/>
            <person name="Newbold C.I."/>
            <person name="Pain A."/>
            <person name="Berriman M."/>
            <person name="Janse C.J."/>
        </authorList>
    </citation>
    <scope>NUCLEOTIDE SEQUENCE [LARGE SCALE GENOMIC DNA]</scope>
    <source>
        <strain evidence="5">ANKA</strain>
    </source>
</reference>
<dbReference type="EMBL" id="CAAI01000395">
    <property type="protein sequence ID" value="CAH94268.1"/>
    <property type="molecule type" value="Genomic_DNA"/>
</dbReference>
<dbReference type="EMBL" id="LK023116">
    <property type="protein sequence ID" value="VUC53847.1"/>
    <property type="molecule type" value="Genomic_DNA"/>
</dbReference>
<dbReference type="SMR" id="Q4Z5T0"/>
<dbReference type="VEuPathDB" id="PlasmoDB:PBANKA_0111100"/>
<dbReference type="eggNOG" id="ENOG502TMXB">
    <property type="taxonomic scope" value="Eukaryota"/>
</dbReference>
<dbReference type="InParanoid" id="A0A509AET0"/>
<dbReference type="OMA" id="FGCDFDH"/>
<dbReference type="Proteomes" id="UP000074855">
    <property type="component" value="Chromosome 1"/>
</dbReference>
<dbReference type="GO" id="GO:0009986">
    <property type="term" value="C:cell surface"/>
    <property type="evidence" value="ECO:0007669"/>
    <property type="project" value="UniProtKB-SubCell"/>
</dbReference>
<dbReference type="GO" id="GO:0005886">
    <property type="term" value="C:plasma membrane"/>
    <property type="evidence" value="ECO:0007669"/>
    <property type="project" value="UniProtKB-SubCell"/>
</dbReference>
<dbReference type="Gene3D" id="2.60.40.2860">
    <property type="match status" value="2"/>
</dbReference>
<dbReference type="InterPro" id="IPR010884">
    <property type="entry name" value="6_CYS_dom"/>
</dbReference>
<dbReference type="InterPro" id="IPR038160">
    <property type="entry name" value="6_CYS_dom_sf"/>
</dbReference>
<dbReference type="Pfam" id="PF07422">
    <property type="entry name" value="s48_45"/>
    <property type="match status" value="2"/>
</dbReference>
<dbReference type="SMART" id="SM00970">
    <property type="entry name" value="s48_45"/>
    <property type="match status" value="2"/>
</dbReference>
<dbReference type="PROSITE" id="PS51701">
    <property type="entry name" value="6_CYS"/>
    <property type="match status" value="2"/>
</dbReference>
<organism>
    <name type="scientific">Plasmodium berghei (strain Anka)</name>
    <dbReference type="NCBI Taxonomy" id="5823"/>
    <lineage>
        <taxon>Eukaryota</taxon>
        <taxon>Sar</taxon>
        <taxon>Alveolata</taxon>
        <taxon>Apicomplexa</taxon>
        <taxon>Aconoidasida</taxon>
        <taxon>Haemosporida</taxon>
        <taxon>Plasmodiidae</taxon>
        <taxon>Plasmodium</taxon>
        <taxon>Plasmodium (Vinckeia)</taxon>
    </lineage>
</organism>
<sequence>MMSIYFWVAIHIFSSFWMIQNIEICDFSRGSLDVALMNNKILIDNNLKEENYNDNNIKHCVIFTKGLEIFTFICPKGNNNDNYKGVEIRPEQCFEKVRINGKEENLKDILKGVVIEKKETDTEIIRKALIPPTIYQDMSFECSCDNSLTIKDNYIGARGIMKVHLKKNIIFGCDFNYDSNEPKLSNGKSAFAQFYDKQVVDSNKNIICNTQVNNKEVYLGLVCPEGYGMYPENCFENVLFEKKVINITELIKHDVKLHIEKNKNISFASFILNPNENPKSFSCHCIKNNDNSFPLIANITFSNYESYSFNFHVTYLILIFILLISYI</sequence>
<protein>
    <recommendedName>
        <fullName>Surface protein P12p</fullName>
    </recommendedName>
</protein>
<accession>Q4Z5T0</accession>
<accession>A0A509AET0</accession>
<keyword id="KW-1003">Cell membrane</keyword>
<keyword id="KW-1015">Disulfide bond</keyword>
<keyword id="KW-0325">Glycoprotein</keyword>
<keyword id="KW-0461">Malaria</keyword>
<keyword id="KW-0472">Membrane</keyword>
<keyword id="KW-1185">Reference proteome</keyword>
<keyword id="KW-0677">Repeat</keyword>
<keyword id="KW-0732">Signal</keyword>
<name>PF12P_PLABA</name>
<gene>
    <name type="primary">P12p</name>
    <name type="ORF">PB000527.00.0</name>
    <name evidence="4" type="ORF">PBANKA_0111100</name>
</gene>
<proteinExistence type="inferred from homology"/>
<feature type="signal peptide" evidence="2">
    <location>
        <begin position="1"/>
        <end status="unknown"/>
    </location>
</feature>
<feature type="chain" id="PRO_0000423569" description="Surface protein P12p">
    <location>
        <begin status="unknown"/>
        <end position="327"/>
    </location>
</feature>
<feature type="domain" description="6-Cys 1" evidence="3">
    <location>
        <begin position="21"/>
        <end position="168"/>
    </location>
</feature>
<feature type="domain" description="6-Cys 2" evidence="3">
    <location>
        <begin position="169"/>
        <end position="304"/>
    </location>
</feature>
<feature type="glycosylation site" description="N-linked (GlcNAc...) asparagine" evidence="2">
    <location>
        <position position="246"/>
    </location>
</feature>
<feature type="glycosylation site" description="N-linked (GlcNAc...) asparagine" evidence="2">
    <location>
        <position position="264"/>
    </location>
</feature>
<feature type="glycosylation site" description="N-linked (GlcNAc...) asparagine" evidence="2">
    <location>
        <position position="298"/>
    </location>
</feature>
<feature type="disulfide bond" evidence="3">
    <location>
        <begin position="25"/>
        <end position="60"/>
    </location>
</feature>
<feature type="disulfide bond" evidence="3">
    <location>
        <begin position="74"/>
        <end position="144"/>
    </location>
</feature>
<feature type="disulfide bond" evidence="3">
    <location>
        <begin position="93"/>
        <end position="142"/>
    </location>
</feature>
<feature type="disulfide bond" evidence="3">
    <location>
        <begin position="173"/>
        <end position="208"/>
    </location>
</feature>
<feature type="disulfide bond" evidence="3">
    <location>
        <begin position="223"/>
        <end position="285"/>
    </location>
</feature>
<feature type="disulfide bond" evidence="3">
    <location>
        <begin position="234"/>
        <end position="283"/>
    </location>
</feature>